<sequence length="438" mass="49290">MPKIVVVGAVAGGATCASQIRRLDKESDIIIFEKDRDMSFANCALPYVIGEVVEDRRYALAYTPEKFYDRKQITVKTYHEVIAINDERQTVSVLNRKTNEQFEESYDKLILSPGASANSLGFESDITFTLRNLEDTDAIDQFIKANQVDKVLVVGAGYVSLEVLENLYERGLHPTLIHRSDKINKLMDADMNQPILDELDKREIPYRLNEEINAINGNEITFKSGKVEHYDMIIEGVGTHPNSKFIESSNIKLDRKGFIPVNDKFETNVPNIYAIGDIATSHYRHVDLPASVPLAWGAHRAASIVAEQIAGNDTIEFKGFLGNNIVKFFDYTFASVGVKPNELKQFDYKMVEVTQGAHANYYPGNSPLHLRVYYDTSNRQILRAAAVGKEGADKRIDVLSMAMMNQLTVDELTEFEVAYAPPYSHPKDLINMIGYKAK</sequence>
<keyword id="KW-0002">3D-structure</keyword>
<keyword id="KW-0274">FAD</keyword>
<keyword id="KW-0285">Flavoprotein</keyword>
<keyword id="KW-0521">NADP</keyword>
<keyword id="KW-0560">Oxidoreductase</keyword>
<keyword id="KW-0676">Redox-active center</keyword>
<accession>Q2FIA5</accession>
<evidence type="ECO:0000255" key="1">
    <source>
        <dbReference type="HAMAP-Rule" id="MF_01608"/>
    </source>
</evidence>
<evidence type="ECO:0007829" key="2">
    <source>
        <dbReference type="PDB" id="4EM3"/>
    </source>
</evidence>
<evidence type="ECO:0007829" key="3">
    <source>
        <dbReference type="PDB" id="4EQS"/>
    </source>
</evidence>
<gene>
    <name evidence="1" type="primary">cdr</name>
    <name type="ordered locus">SAUSA300_0873</name>
</gene>
<protein>
    <recommendedName>
        <fullName evidence="1">Coenzyme A disulfide reductase</fullName>
        <shortName evidence="1">CoA-disulfide reductase</shortName>
        <shortName evidence="1">CoADR</shortName>
        <ecNumber evidence="1">1.8.1.14</ecNumber>
    </recommendedName>
</protein>
<feature type="chain" id="PRO_0000289961" description="Coenzyme A disulfide reductase">
    <location>
        <begin position="1"/>
        <end position="438"/>
    </location>
</feature>
<feature type="active site" description="Nucleophile" evidence="1">
    <location>
        <position position="43"/>
    </location>
</feature>
<feature type="active site" description="Redox-active" evidence="1">
    <location>
        <position position="43"/>
    </location>
</feature>
<feature type="binding site" evidence="1">
    <location>
        <begin position="8"/>
        <end position="33"/>
    </location>
    <ligand>
        <name>FAD</name>
        <dbReference type="ChEBI" id="CHEBI:57692"/>
    </ligand>
</feature>
<feature type="binding site" evidence="1">
    <location>
        <position position="15"/>
    </location>
    <ligand>
        <name>substrate</name>
    </ligand>
</feature>
<feature type="binding site" evidence="1">
    <location>
        <position position="19"/>
    </location>
    <ligand>
        <name>substrate</name>
    </ligand>
</feature>
<feature type="binding site" evidence="1">
    <location>
        <position position="22"/>
    </location>
    <ligand>
        <name>substrate</name>
    </ligand>
</feature>
<feature type="binding site" evidence="1">
    <location>
        <position position="39"/>
    </location>
    <ligand>
        <name>substrate</name>
    </ligand>
</feature>
<feature type="binding site" evidence="1">
    <location>
        <position position="42"/>
    </location>
    <ligand>
        <name>substrate</name>
    </ligand>
</feature>
<feature type="binding site" evidence="1">
    <location>
        <position position="71"/>
    </location>
    <ligand>
        <name>substrate</name>
    </ligand>
</feature>
<feature type="binding site" evidence="1">
    <location>
        <begin position="151"/>
        <end position="166"/>
    </location>
    <ligand>
        <name>NADP(+)</name>
        <dbReference type="ChEBI" id="CHEBI:58349"/>
    </ligand>
</feature>
<feature type="binding site" evidence="1">
    <location>
        <begin position="267"/>
        <end position="277"/>
    </location>
    <ligand>
        <name>FAD</name>
        <dbReference type="ChEBI" id="CHEBI:57692"/>
    </ligand>
</feature>
<feature type="binding site" evidence="1">
    <location>
        <position position="299"/>
    </location>
    <ligand>
        <name>substrate</name>
    </ligand>
</feature>
<feature type="binding site" evidence="1">
    <location>
        <position position="419"/>
    </location>
    <ligand>
        <name>FAD</name>
        <dbReference type="ChEBI" id="CHEBI:57692"/>
    </ligand>
</feature>
<feature type="binding site" evidence="1">
    <location>
        <position position="427"/>
    </location>
    <ligand>
        <name>substrate</name>
    </ligand>
</feature>
<feature type="strand" evidence="3">
    <location>
        <begin position="4"/>
        <end position="7"/>
    </location>
</feature>
<feature type="helix" evidence="3">
    <location>
        <begin position="13"/>
        <end position="23"/>
    </location>
</feature>
<feature type="strand" evidence="3">
    <location>
        <begin position="25"/>
        <end position="27"/>
    </location>
</feature>
<feature type="strand" evidence="3">
    <location>
        <begin position="29"/>
        <end position="36"/>
    </location>
</feature>
<feature type="strand" evidence="3">
    <location>
        <begin position="38"/>
        <end position="40"/>
    </location>
</feature>
<feature type="helix" evidence="3">
    <location>
        <begin position="42"/>
        <end position="44"/>
    </location>
</feature>
<feature type="helix" evidence="3">
    <location>
        <begin position="45"/>
        <end position="49"/>
    </location>
</feature>
<feature type="helix" evidence="3">
    <location>
        <begin position="56"/>
        <end position="58"/>
    </location>
</feature>
<feature type="helix" evidence="3">
    <location>
        <begin position="64"/>
        <end position="71"/>
    </location>
</feature>
<feature type="strand" evidence="3">
    <location>
        <begin position="74"/>
        <end position="77"/>
    </location>
</feature>
<feature type="strand" evidence="3">
    <location>
        <begin position="79"/>
        <end position="85"/>
    </location>
</feature>
<feature type="turn" evidence="3">
    <location>
        <begin position="86"/>
        <end position="89"/>
    </location>
</feature>
<feature type="strand" evidence="3">
    <location>
        <begin position="90"/>
        <end position="95"/>
    </location>
</feature>
<feature type="turn" evidence="3">
    <location>
        <begin position="96"/>
        <end position="99"/>
    </location>
</feature>
<feature type="strand" evidence="3">
    <location>
        <begin position="100"/>
        <end position="105"/>
    </location>
</feature>
<feature type="strand" evidence="3">
    <location>
        <begin position="107"/>
        <end position="111"/>
    </location>
</feature>
<feature type="strand" evidence="3">
    <location>
        <begin position="115"/>
        <end position="117"/>
    </location>
</feature>
<feature type="strand" evidence="2">
    <location>
        <begin position="125"/>
        <end position="128"/>
    </location>
</feature>
<feature type="helix" evidence="3">
    <location>
        <begin position="133"/>
        <end position="146"/>
    </location>
</feature>
<feature type="strand" evidence="3">
    <location>
        <begin position="150"/>
        <end position="154"/>
    </location>
</feature>
<feature type="helix" evidence="3">
    <location>
        <begin position="158"/>
        <end position="170"/>
    </location>
</feature>
<feature type="strand" evidence="3">
    <location>
        <begin position="173"/>
        <end position="181"/>
    </location>
</feature>
<feature type="helix" evidence="3">
    <location>
        <begin position="189"/>
        <end position="192"/>
    </location>
</feature>
<feature type="helix" evidence="3">
    <location>
        <begin position="193"/>
        <end position="201"/>
    </location>
</feature>
<feature type="strand" evidence="3">
    <location>
        <begin position="206"/>
        <end position="209"/>
    </location>
</feature>
<feature type="strand" evidence="3">
    <location>
        <begin position="212"/>
        <end position="216"/>
    </location>
</feature>
<feature type="strand" evidence="3">
    <location>
        <begin position="219"/>
        <end position="222"/>
    </location>
</feature>
<feature type="strand" evidence="3">
    <location>
        <begin position="227"/>
        <end position="229"/>
    </location>
</feature>
<feature type="strand" evidence="3">
    <location>
        <begin position="231"/>
        <end position="235"/>
    </location>
</feature>
<feature type="strand" evidence="3">
    <location>
        <begin position="239"/>
        <end position="242"/>
    </location>
</feature>
<feature type="helix" evidence="3">
    <location>
        <begin position="244"/>
        <end position="246"/>
    </location>
</feature>
<feature type="strand" evidence="3">
    <location>
        <begin position="272"/>
        <end position="274"/>
    </location>
</feature>
<feature type="helix" evidence="3">
    <location>
        <begin position="276"/>
        <end position="278"/>
    </location>
</feature>
<feature type="strand" evidence="3">
    <location>
        <begin position="279"/>
        <end position="290"/>
    </location>
</feature>
<feature type="helix" evidence="3">
    <location>
        <begin position="295"/>
        <end position="310"/>
    </location>
</feature>
<feature type="strand" evidence="3">
    <location>
        <begin position="324"/>
        <end position="328"/>
    </location>
</feature>
<feature type="strand" evidence="3">
    <location>
        <begin position="331"/>
        <end position="338"/>
    </location>
</feature>
<feature type="helix" evidence="3">
    <location>
        <begin position="340"/>
        <end position="345"/>
    </location>
</feature>
<feature type="strand" evidence="3">
    <location>
        <begin position="348"/>
        <end position="358"/>
    </location>
</feature>
<feature type="strand" evidence="3">
    <location>
        <begin position="362"/>
        <end position="364"/>
    </location>
</feature>
<feature type="strand" evidence="3">
    <location>
        <begin position="367"/>
        <end position="375"/>
    </location>
</feature>
<feature type="turn" evidence="3">
    <location>
        <begin position="376"/>
        <end position="378"/>
    </location>
</feature>
<feature type="strand" evidence="3">
    <location>
        <begin position="380"/>
        <end position="391"/>
    </location>
</feature>
<feature type="helix" evidence="3">
    <location>
        <begin position="392"/>
        <end position="404"/>
    </location>
</feature>
<feature type="helix" evidence="3">
    <location>
        <begin position="409"/>
        <end position="414"/>
    </location>
</feature>
<feature type="turn" evidence="3">
    <location>
        <begin position="421"/>
        <end position="423"/>
    </location>
</feature>
<feature type="helix" evidence="3">
    <location>
        <begin position="429"/>
        <end position="435"/>
    </location>
</feature>
<comment type="function">
    <text evidence="1">Catalyzes specifically the NADPH-dependent reduction of coenzyme A disulfide.</text>
</comment>
<comment type="catalytic activity">
    <reaction evidence="1">
        <text>NADP(+) + 2 CoA = CoA-disulfide + NADPH + H(+)</text>
        <dbReference type="Rhea" id="RHEA:14705"/>
        <dbReference type="ChEBI" id="CHEBI:15378"/>
        <dbReference type="ChEBI" id="CHEBI:57287"/>
        <dbReference type="ChEBI" id="CHEBI:57783"/>
        <dbReference type="ChEBI" id="CHEBI:58349"/>
        <dbReference type="ChEBI" id="CHEBI:62209"/>
        <dbReference type="EC" id="1.8.1.14"/>
    </reaction>
</comment>
<comment type="cofactor">
    <cofactor evidence="1">
        <name>FAD</name>
        <dbReference type="ChEBI" id="CHEBI:57692"/>
    </cofactor>
    <text evidence="1">Binds 1 FAD per subunit.</text>
</comment>
<comment type="subunit">
    <text evidence="1">Homodimer.</text>
</comment>
<comment type="domain">
    <text evidence="1">Contains 2 FAD binding domains and a single NADPH binding domain.</text>
</comment>
<comment type="miscellaneous">
    <text evidence="1">Reduction of disulfides occurs by a thiol-disulfide exchange reaction, but involves only a single catalytic cysteine residue that forms a stable mixed disulfide with CoA during catalysis.</text>
</comment>
<comment type="similarity">
    <text evidence="1">Belongs to the class-III pyridine nucleotide-disulfide oxidoreductase family.</text>
</comment>
<name>CDR_STAA3</name>
<organism>
    <name type="scientific">Staphylococcus aureus (strain USA300)</name>
    <dbReference type="NCBI Taxonomy" id="367830"/>
    <lineage>
        <taxon>Bacteria</taxon>
        <taxon>Bacillati</taxon>
        <taxon>Bacillota</taxon>
        <taxon>Bacilli</taxon>
        <taxon>Bacillales</taxon>
        <taxon>Staphylococcaceae</taxon>
        <taxon>Staphylococcus</taxon>
    </lineage>
</organism>
<dbReference type="EC" id="1.8.1.14" evidence="1"/>
<dbReference type="EMBL" id="CP000255">
    <property type="protein sequence ID" value="ABD21541.1"/>
    <property type="molecule type" value="Genomic_DNA"/>
</dbReference>
<dbReference type="RefSeq" id="WP_001124525.1">
    <property type="nucleotide sequence ID" value="NZ_CP027476.1"/>
</dbReference>
<dbReference type="PDB" id="4EM3">
    <property type="method" value="X-ray"/>
    <property type="resolution" value="1.98 A"/>
    <property type="chains" value="A/B=2-438"/>
</dbReference>
<dbReference type="PDB" id="4EM4">
    <property type="method" value="X-ray"/>
    <property type="resolution" value="1.82 A"/>
    <property type="chains" value="A/B=2-438"/>
</dbReference>
<dbReference type="PDB" id="4EMW">
    <property type="method" value="X-ray"/>
    <property type="resolution" value="2.39 A"/>
    <property type="chains" value="A/B=2-437"/>
</dbReference>
<dbReference type="PDB" id="4EQR">
    <property type="method" value="X-ray"/>
    <property type="resolution" value="1.80 A"/>
    <property type="chains" value="A/B=2-438"/>
</dbReference>
<dbReference type="PDB" id="4EQS">
    <property type="method" value="X-ray"/>
    <property type="resolution" value="1.50 A"/>
    <property type="chains" value="A/B=2-438"/>
</dbReference>
<dbReference type="PDB" id="4EQW">
    <property type="method" value="X-ray"/>
    <property type="resolution" value="1.50 A"/>
    <property type="chains" value="A/B=2-438"/>
</dbReference>
<dbReference type="PDB" id="4EQX">
    <property type="method" value="X-ray"/>
    <property type="resolution" value="1.70 A"/>
    <property type="chains" value="A/B=2-438"/>
</dbReference>
<dbReference type="PDBsum" id="4EM3"/>
<dbReference type="PDBsum" id="4EM4"/>
<dbReference type="PDBsum" id="4EMW"/>
<dbReference type="PDBsum" id="4EQR"/>
<dbReference type="PDBsum" id="4EQS"/>
<dbReference type="PDBsum" id="4EQW"/>
<dbReference type="PDBsum" id="4EQX"/>
<dbReference type="SMR" id="Q2FIA5"/>
<dbReference type="KEGG" id="saa:SAUSA300_0873"/>
<dbReference type="HOGENOM" id="CLU_003291_1_3_9"/>
<dbReference type="OMA" id="CPGPIMQ"/>
<dbReference type="BRENDA" id="1.8.1.14">
    <property type="organism ID" value="3352"/>
</dbReference>
<dbReference type="EvolutionaryTrace" id="Q2FIA5"/>
<dbReference type="Proteomes" id="UP000001939">
    <property type="component" value="Chromosome"/>
</dbReference>
<dbReference type="GO" id="GO:0050451">
    <property type="term" value="F:CoA-disulfide reductase (NADPH) activity"/>
    <property type="evidence" value="ECO:0007669"/>
    <property type="project" value="UniProtKB-UniRule"/>
</dbReference>
<dbReference type="GO" id="GO:0050660">
    <property type="term" value="F:flavin adenine dinucleotide binding"/>
    <property type="evidence" value="ECO:0007669"/>
    <property type="project" value="UniProtKB-UniRule"/>
</dbReference>
<dbReference type="GO" id="GO:0050661">
    <property type="term" value="F:NADP binding"/>
    <property type="evidence" value="ECO:0007669"/>
    <property type="project" value="UniProtKB-UniRule"/>
</dbReference>
<dbReference type="GO" id="GO:0003756">
    <property type="term" value="F:protein disulfide isomerase activity"/>
    <property type="evidence" value="ECO:0007669"/>
    <property type="project" value="UniProtKB-UniRule"/>
</dbReference>
<dbReference type="Gene3D" id="3.30.390.30">
    <property type="match status" value="1"/>
</dbReference>
<dbReference type="Gene3D" id="3.50.50.60">
    <property type="entry name" value="FAD/NAD(P)-binding domain"/>
    <property type="match status" value="2"/>
</dbReference>
<dbReference type="HAMAP" id="MF_01608">
    <property type="entry name" value="CoA_diS_reduct"/>
    <property type="match status" value="1"/>
</dbReference>
<dbReference type="InterPro" id="IPR017758">
    <property type="entry name" value="CoA_disulphide_reductase"/>
</dbReference>
<dbReference type="InterPro" id="IPR023536">
    <property type="entry name" value="CoA_disulphide_reductase_staph"/>
</dbReference>
<dbReference type="InterPro" id="IPR050260">
    <property type="entry name" value="FAD-bd_OxRdtase"/>
</dbReference>
<dbReference type="InterPro" id="IPR036188">
    <property type="entry name" value="FAD/NAD-bd_sf"/>
</dbReference>
<dbReference type="InterPro" id="IPR023753">
    <property type="entry name" value="FAD/NAD-binding_dom"/>
</dbReference>
<dbReference type="InterPro" id="IPR016156">
    <property type="entry name" value="FAD/NAD-linked_Rdtase_dimer_sf"/>
</dbReference>
<dbReference type="InterPro" id="IPR004099">
    <property type="entry name" value="Pyr_nucl-diS_OxRdtase_dimer"/>
</dbReference>
<dbReference type="NCBIfam" id="TIGR03385">
    <property type="entry name" value="CoA_CoA_reduc"/>
    <property type="match status" value="1"/>
</dbReference>
<dbReference type="NCBIfam" id="NF010037">
    <property type="entry name" value="PRK13512.1"/>
    <property type="match status" value="1"/>
</dbReference>
<dbReference type="PANTHER" id="PTHR43429:SF1">
    <property type="entry name" value="NAD(P)H SULFUR OXIDOREDUCTASE (COA-DEPENDENT)"/>
    <property type="match status" value="1"/>
</dbReference>
<dbReference type="PANTHER" id="PTHR43429">
    <property type="entry name" value="PYRIDINE NUCLEOTIDE-DISULFIDE OXIDOREDUCTASE DOMAIN-CONTAINING"/>
    <property type="match status" value="1"/>
</dbReference>
<dbReference type="Pfam" id="PF07992">
    <property type="entry name" value="Pyr_redox_2"/>
    <property type="match status" value="1"/>
</dbReference>
<dbReference type="Pfam" id="PF02852">
    <property type="entry name" value="Pyr_redox_dim"/>
    <property type="match status" value="1"/>
</dbReference>
<dbReference type="PRINTS" id="PR00368">
    <property type="entry name" value="FADPNR"/>
</dbReference>
<dbReference type="PRINTS" id="PR00411">
    <property type="entry name" value="PNDRDTASEI"/>
</dbReference>
<dbReference type="SUPFAM" id="SSF51905">
    <property type="entry name" value="FAD/NAD(P)-binding domain"/>
    <property type="match status" value="1"/>
</dbReference>
<dbReference type="SUPFAM" id="SSF55424">
    <property type="entry name" value="FAD/NAD-linked reductases, dimerisation (C-terminal) domain"/>
    <property type="match status" value="1"/>
</dbReference>
<proteinExistence type="evidence at protein level"/>
<reference key="1">
    <citation type="journal article" date="2006" name="Lancet">
        <title>Complete genome sequence of USA300, an epidemic clone of community-acquired meticillin-resistant Staphylococcus aureus.</title>
        <authorList>
            <person name="Diep B.A."/>
            <person name="Gill S.R."/>
            <person name="Chang R.F."/>
            <person name="Phan T.H."/>
            <person name="Chen J.H."/>
            <person name="Davidson M.G."/>
            <person name="Lin F."/>
            <person name="Lin J."/>
            <person name="Carleton H.A."/>
            <person name="Mongodin E.F."/>
            <person name="Sensabaugh G.F."/>
            <person name="Perdreau-Remington F."/>
        </authorList>
    </citation>
    <scope>NUCLEOTIDE SEQUENCE [LARGE SCALE GENOMIC DNA]</scope>
    <source>
        <strain>USA300</strain>
    </source>
</reference>